<comment type="function">
    <text evidence="1">Catalyzes the isomerization between 2-isopropylmalate and 3-isopropylmalate, via the formation of 2-isopropylmaleate.</text>
</comment>
<comment type="catalytic activity">
    <reaction evidence="1">
        <text>(2R,3S)-3-isopropylmalate = (2S)-2-isopropylmalate</text>
        <dbReference type="Rhea" id="RHEA:32287"/>
        <dbReference type="ChEBI" id="CHEBI:1178"/>
        <dbReference type="ChEBI" id="CHEBI:35121"/>
        <dbReference type="EC" id="4.2.1.33"/>
    </reaction>
</comment>
<comment type="cofactor">
    <cofactor evidence="1">
        <name>[4Fe-4S] cluster</name>
        <dbReference type="ChEBI" id="CHEBI:49883"/>
    </cofactor>
    <text evidence="1">Binds 1 [4Fe-4S] cluster per subunit.</text>
</comment>
<comment type="pathway">
    <text evidence="1">Amino-acid biosynthesis; L-leucine biosynthesis; L-leucine from 3-methyl-2-oxobutanoate: step 2/4.</text>
</comment>
<comment type="subunit">
    <text evidence="1">Heterodimer of LeuC and LeuD.</text>
</comment>
<comment type="similarity">
    <text evidence="1">Belongs to the aconitase/IPM isomerase family. LeuC type 1 subfamily.</text>
</comment>
<sequence length="468" mass="51274">MSQDTLFDKVWDLHKVSSLPGGSDQIFIGLHLIHEVTSPQAFGALKDKNLKVKFPERTVATVDHIVPTDNQSRPFKDNLAEQMIETLEKNCLDHNIRFFNIGSGNQGIVHVVAPELGLTQPGMTIACGDSHTSTHGAFGSIAFGIGTSQVRDVLASQTIAMNKLKVRQIWCDNKLSKGVYAKDLVLHIINELGVKAGVGFAYEFAGPAIDDLSMEERMTICNMSIEGGARCGYINPDEKTFSYIKNKLCAPKNEHWDKALKWWKSLKSDENSIYDDVVKLNASEVEPTVTWGITPGQSISINQQIPLLDDLSPNDKLVAKEAYEYMSFKPGQLIKDTPVDVCFIGSCTNGRISDLRVAAQVLKDKKVSKNVKAFVVPGSEKVATEAKQEGIDQIFKDSGFQWREPGCSMCLAMNSDKLIGNQVSASSSNRNFKGRQGSPSGRTLLMSPAMVAAAAINGKVSDVREFIN</sequence>
<gene>
    <name evidence="1" type="primary">leuC</name>
    <name type="ordered locus">P9215_02801</name>
</gene>
<dbReference type="EC" id="4.2.1.33" evidence="1"/>
<dbReference type="EMBL" id="CP000825">
    <property type="protein sequence ID" value="ABV49897.1"/>
    <property type="molecule type" value="Genomic_DNA"/>
</dbReference>
<dbReference type="RefSeq" id="WP_012007056.1">
    <property type="nucleotide sequence ID" value="NC_009840.1"/>
</dbReference>
<dbReference type="SMR" id="A8G2R6"/>
<dbReference type="STRING" id="93060.P9215_02801"/>
<dbReference type="KEGG" id="pmh:P9215_02801"/>
<dbReference type="eggNOG" id="COG0065">
    <property type="taxonomic scope" value="Bacteria"/>
</dbReference>
<dbReference type="HOGENOM" id="CLU_006714_3_4_3"/>
<dbReference type="OrthoDB" id="9802769at2"/>
<dbReference type="UniPathway" id="UPA00048">
    <property type="reaction ID" value="UER00071"/>
</dbReference>
<dbReference type="Proteomes" id="UP000002014">
    <property type="component" value="Chromosome"/>
</dbReference>
<dbReference type="GO" id="GO:0003861">
    <property type="term" value="F:3-isopropylmalate dehydratase activity"/>
    <property type="evidence" value="ECO:0007669"/>
    <property type="project" value="UniProtKB-UniRule"/>
</dbReference>
<dbReference type="GO" id="GO:0051539">
    <property type="term" value="F:4 iron, 4 sulfur cluster binding"/>
    <property type="evidence" value="ECO:0007669"/>
    <property type="project" value="UniProtKB-KW"/>
</dbReference>
<dbReference type="GO" id="GO:0046872">
    <property type="term" value="F:metal ion binding"/>
    <property type="evidence" value="ECO:0007669"/>
    <property type="project" value="UniProtKB-KW"/>
</dbReference>
<dbReference type="GO" id="GO:0009098">
    <property type="term" value="P:L-leucine biosynthetic process"/>
    <property type="evidence" value="ECO:0007669"/>
    <property type="project" value="UniProtKB-UniRule"/>
</dbReference>
<dbReference type="CDD" id="cd01583">
    <property type="entry name" value="IPMI"/>
    <property type="match status" value="1"/>
</dbReference>
<dbReference type="Gene3D" id="3.30.499.10">
    <property type="entry name" value="Aconitase, domain 3"/>
    <property type="match status" value="2"/>
</dbReference>
<dbReference type="HAMAP" id="MF_01026">
    <property type="entry name" value="LeuC_type1"/>
    <property type="match status" value="1"/>
</dbReference>
<dbReference type="InterPro" id="IPR004430">
    <property type="entry name" value="3-IsopropMal_deHydase_lsu"/>
</dbReference>
<dbReference type="InterPro" id="IPR015931">
    <property type="entry name" value="Acnase/IPM_dHydase_lsu_aba_1/3"/>
</dbReference>
<dbReference type="InterPro" id="IPR001030">
    <property type="entry name" value="Acoase/IPM_deHydtase_lsu_aba"/>
</dbReference>
<dbReference type="InterPro" id="IPR018136">
    <property type="entry name" value="Aconitase_4Fe-4S_BS"/>
</dbReference>
<dbReference type="InterPro" id="IPR036008">
    <property type="entry name" value="Aconitase_4Fe-4S_dom"/>
</dbReference>
<dbReference type="InterPro" id="IPR050067">
    <property type="entry name" value="IPM_dehydratase_rel_enz"/>
</dbReference>
<dbReference type="InterPro" id="IPR033941">
    <property type="entry name" value="IPMI_cat"/>
</dbReference>
<dbReference type="NCBIfam" id="TIGR00170">
    <property type="entry name" value="leuC"/>
    <property type="match status" value="1"/>
</dbReference>
<dbReference type="NCBIfam" id="NF004016">
    <property type="entry name" value="PRK05478.1"/>
    <property type="match status" value="1"/>
</dbReference>
<dbReference type="NCBIfam" id="NF009116">
    <property type="entry name" value="PRK12466.1"/>
    <property type="match status" value="1"/>
</dbReference>
<dbReference type="PANTHER" id="PTHR43822:SF9">
    <property type="entry name" value="3-ISOPROPYLMALATE DEHYDRATASE"/>
    <property type="match status" value="1"/>
</dbReference>
<dbReference type="PANTHER" id="PTHR43822">
    <property type="entry name" value="HOMOACONITASE, MITOCHONDRIAL-RELATED"/>
    <property type="match status" value="1"/>
</dbReference>
<dbReference type="Pfam" id="PF00330">
    <property type="entry name" value="Aconitase"/>
    <property type="match status" value="1"/>
</dbReference>
<dbReference type="PRINTS" id="PR00415">
    <property type="entry name" value="ACONITASE"/>
</dbReference>
<dbReference type="SUPFAM" id="SSF53732">
    <property type="entry name" value="Aconitase iron-sulfur domain"/>
    <property type="match status" value="1"/>
</dbReference>
<dbReference type="PROSITE" id="PS00450">
    <property type="entry name" value="ACONITASE_1"/>
    <property type="match status" value="1"/>
</dbReference>
<dbReference type="PROSITE" id="PS01244">
    <property type="entry name" value="ACONITASE_2"/>
    <property type="match status" value="1"/>
</dbReference>
<name>LEUC_PROM2</name>
<proteinExistence type="inferred from homology"/>
<protein>
    <recommendedName>
        <fullName evidence="1">3-isopropylmalate dehydratase large subunit</fullName>
        <ecNumber evidence="1">4.2.1.33</ecNumber>
    </recommendedName>
    <alternativeName>
        <fullName evidence="1">Alpha-IPM isomerase</fullName>
        <shortName evidence="1">IPMI</shortName>
    </alternativeName>
    <alternativeName>
        <fullName evidence="1">Isopropylmalate isomerase</fullName>
    </alternativeName>
</protein>
<reference key="1">
    <citation type="journal article" date="2007" name="PLoS Genet.">
        <title>Patterns and implications of gene gain and loss in the evolution of Prochlorococcus.</title>
        <authorList>
            <person name="Kettler G.C."/>
            <person name="Martiny A.C."/>
            <person name="Huang K."/>
            <person name="Zucker J."/>
            <person name="Coleman M.L."/>
            <person name="Rodrigue S."/>
            <person name="Chen F."/>
            <person name="Lapidus A."/>
            <person name="Ferriera S."/>
            <person name="Johnson J."/>
            <person name="Steglich C."/>
            <person name="Church G.M."/>
            <person name="Richardson P."/>
            <person name="Chisholm S.W."/>
        </authorList>
    </citation>
    <scope>NUCLEOTIDE SEQUENCE [LARGE SCALE GENOMIC DNA]</scope>
    <source>
        <strain>MIT 9215</strain>
    </source>
</reference>
<feature type="chain" id="PRO_1000063584" description="3-isopropylmalate dehydratase large subunit">
    <location>
        <begin position="1"/>
        <end position="468"/>
    </location>
</feature>
<feature type="region of interest" description="Disordered" evidence="2">
    <location>
        <begin position="424"/>
        <end position="443"/>
    </location>
</feature>
<feature type="compositionally biased region" description="Polar residues" evidence="2">
    <location>
        <begin position="424"/>
        <end position="441"/>
    </location>
</feature>
<feature type="binding site" evidence="1">
    <location>
        <position position="347"/>
    </location>
    <ligand>
        <name>[4Fe-4S] cluster</name>
        <dbReference type="ChEBI" id="CHEBI:49883"/>
    </ligand>
</feature>
<feature type="binding site" evidence="1">
    <location>
        <position position="407"/>
    </location>
    <ligand>
        <name>[4Fe-4S] cluster</name>
        <dbReference type="ChEBI" id="CHEBI:49883"/>
    </ligand>
</feature>
<feature type="binding site" evidence="1">
    <location>
        <position position="410"/>
    </location>
    <ligand>
        <name>[4Fe-4S] cluster</name>
        <dbReference type="ChEBI" id="CHEBI:49883"/>
    </ligand>
</feature>
<evidence type="ECO:0000255" key="1">
    <source>
        <dbReference type="HAMAP-Rule" id="MF_01026"/>
    </source>
</evidence>
<evidence type="ECO:0000256" key="2">
    <source>
        <dbReference type="SAM" id="MobiDB-lite"/>
    </source>
</evidence>
<organism>
    <name type="scientific">Prochlorococcus marinus (strain MIT 9215)</name>
    <dbReference type="NCBI Taxonomy" id="93060"/>
    <lineage>
        <taxon>Bacteria</taxon>
        <taxon>Bacillati</taxon>
        <taxon>Cyanobacteriota</taxon>
        <taxon>Cyanophyceae</taxon>
        <taxon>Synechococcales</taxon>
        <taxon>Prochlorococcaceae</taxon>
        <taxon>Prochlorococcus</taxon>
    </lineage>
</organism>
<accession>A8G2R6</accession>
<keyword id="KW-0004">4Fe-4S</keyword>
<keyword id="KW-0028">Amino-acid biosynthesis</keyword>
<keyword id="KW-0100">Branched-chain amino acid biosynthesis</keyword>
<keyword id="KW-0408">Iron</keyword>
<keyword id="KW-0411">Iron-sulfur</keyword>
<keyword id="KW-0432">Leucine biosynthesis</keyword>
<keyword id="KW-0456">Lyase</keyword>
<keyword id="KW-0479">Metal-binding</keyword>